<evidence type="ECO:0000255" key="1">
    <source>
        <dbReference type="PROSITE-ProRule" id="PRU01151"/>
    </source>
</evidence>
<evidence type="ECO:0000269" key="2">
    <source>
    </source>
</evidence>
<evidence type="ECO:0000305" key="3"/>
<evidence type="ECO:0000305" key="4">
    <source>
    </source>
</evidence>
<protein>
    <recommendedName>
        <fullName>Homocitrate synthase AksA</fullName>
        <ecNumber evidence="2">2.3.3.14</ecNumber>
    </recommendedName>
    <alternativeName>
        <fullName>(R)-homo(2)citrate synthase</fullName>
        <ecNumber evidence="2">2.3.3.-</ecNumber>
    </alternativeName>
    <alternativeName>
        <fullName>(R)-homo(3)citrate synthase</fullName>
        <ecNumber evidence="2">2.3.3.-</ecNumber>
    </alternativeName>
</protein>
<accession>Q57926</accession>
<proteinExistence type="evidence at protein level"/>
<dbReference type="EC" id="2.3.3.14" evidence="2"/>
<dbReference type="EC" id="2.3.3.-" evidence="2"/>
<dbReference type="EMBL" id="L77117">
    <property type="protein sequence ID" value="AAB98494.1"/>
    <property type="molecule type" value="Genomic_DNA"/>
</dbReference>
<dbReference type="PIR" id="G64362">
    <property type="entry name" value="G64362"/>
</dbReference>
<dbReference type="SMR" id="Q57926"/>
<dbReference type="FunCoup" id="Q57926">
    <property type="interactions" value="299"/>
</dbReference>
<dbReference type="STRING" id="243232.MJ_0503"/>
<dbReference type="PaxDb" id="243232-MJ_0503"/>
<dbReference type="EnsemblBacteria" id="AAB98494">
    <property type="protein sequence ID" value="AAB98494"/>
    <property type="gene ID" value="MJ_0503"/>
</dbReference>
<dbReference type="KEGG" id="mja:MJ_0503"/>
<dbReference type="eggNOG" id="arCOG02092">
    <property type="taxonomic scope" value="Archaea"/>
</dbReference>
<dbReference type="HOGENOM" id="CLU_022158_4_2_2"/>
<dbReference type="InParanoid" id="Q57926"/>
<dbReference type="PhylomeDB" id="Q57926"/>
<dbReference type="UniPathway" id="UPA00919"/>
<dbReference type="Proteomes" id="UP000000805">
    <property type="component" value="Chromosome"/>
</dbReference>
<dbReference type="GO" id="GO:0004410">
    <property type="term" value="F:homocitrate synthase activity"/>
    <property type="evidence" value="ECO:0007669"/>
    <property type="project" value="UniProtKB-EC"/>
</dbReference>
<dbReference type="GO" id="GO:0019298">
    <property type="term" value="P:coenzyme B biosynthetic process"/>
    <property type="evidence" value="ECO:0000314"/>
    <property type="project" value="MENGO"/>
</dbReference>
<dbReference type="CDD" id="cd07940">
    <property type="entry name" value="DRE_TIM_IPMS"/>
    <property type="match status" value="1"/>
</dbReference>
<dbReference type="FunFam" id="1.10.238.260:FF:000001">
    <property type="entry name" value="2-isopropylmalate synthase"/>
    <property type="match status" value="1"/>
</dbReference>
<dbReference type="FunFam" id="3.20.20.70:FF:000010">
    <property type="entry name" value="2-isopropylmalate synthase"/>
    <property type="match status" value="1"/>
</dbReference>
<dbReference type="Gene3D" id="1.10.238.260">
    <property type="match status" value="1"/>
</dbReference>
<dbReference type="Gene3D" id="3.20.20.70">
    <property type="entry name" value="Aldolase class I"/>
    <property type="match status" value="1"/>
</dbReference>
<dbReference type="InterPro" id="IPR002034">
    <property type="entry name" value="AIPM/Hcit_synth_CS"/>
</dbReference>
<dbReference type="InterPro" id="IPR013785">
    <property type="entry name" value="Aldolase_TIM"/>
</dbReference>
<dbReference type="InterPro" id="IPR011830">
    <property type="entry name" value="LEU1_arch"/>
</dbReference>
<dbReference type="InterPro" id="IPR054691">
    <property type="entry name" value="LeuA/HCS_post-cat"/>
</dbReference>
<dbReference type="InterPro" id="IPR000891">
    <property type="entry name" value="PYR_CT"/>
</dbReference>
<dbReference type="NCBIfam" id="TIGR02090">
    <property type="entry name" value="LEU1_arch"/>
    <property type="match status" value="1"/>
</dbReference>
<dbReference type="PANTHER" id="PTHR42880:SF2">
    <property type="entry name" value="(R)-CITRAMALATE SYNTHASE CIMA"/>
    <property type="match status" value="1"/>
</dbReference>
<dbReference type="PANTHER" id="PTHR42880">
    <property type="entry name" value="HOMOCITRATE SYNTHASE"/>
    <property type="match status" value="1"/>
</dbReference>
<dbReference type="Pfam" id="PF22617">
    <property type="entry name" value="HCS_D2"/>
    <property type="match status" value="1"/>
</dbReference>
<dbReference type="Pfam" id="PF00682">
    <property type="entry name" value="HMGL-like"/>
    <property type="match status" value="1"/>
</dbReference>
<dbReference type="SUPFAM" id="SSF51569">
    <property type="entry name" value="Aldolase"/>
    <property type="match status" value="1"/>
</dbReference>
<dbReference type="PROSITE" id="PS00815">
    <property type="entry name" value="AIPM_HOMOCIT_SYNTH_1"/>
    <property type="match status" value="1"/>
</dbReference>
<dbReference type="PROSITE" id="PS00816">
    <property type="entry name" value="AIPM_HOMOCIT_SYNTH_2"/>
    <property type="match status" value="1"/>
</dbReference>
<dbReference type="PROSITE" id="PS50991">
    <property type="entry name" value="PYR_CT"/>
    <property type="match status" value="1"/>
</dbReference>
<comment type="function">
    <text evidence="2">Catalyzes the condensation of alpha-ketoglutarate and acetyl-CoA to form (R)-homocitrate. Can also catalyze the condensation of alpha-ketoadipate with acetyl-CoA to form (R)-homo(2)citrate, and the condensation of alpha-ketopimelate with acetyl-CoA to form (R)-homo(3)citrate. These reactions are part of the biosynthesis pathway of coenzyme B and biotin.</text>
</comment>
<comment type="catalytic activity">
    <reaction evidence="2">
        <text>acetyl-CoA + 2-oxoglutarate + H2O = (2R)-homocitrate + CoA + H(+)</text>
        <dbReference type="Rhea" id="RHEA:12929"/>
        <dbReference type="ChEBI" id="CHEBI:15377"/>
        <dbReference type="ChEBI" id="CHEBI:15378"/>
        <dbReference type="ChEBI" id="CHEBI:16810"/>
        <dbReference type="ChEBI" id="CHEBI:57287"/>
        <dbReference type="ChEBI" id="CHEBI:57288"/>
        <dbReference type="ChEBI" id="CHEBI:58884"/>
        <dbReference type="EC" id="2.3.3.14"/>
    </reaction>
    <physiologicalReaction direction="left-to-right" evidence="4">
        <dbReference type="Rhea" id="RHEA:12930"/>
    </physiologicalReaction>
</comment>
<comment type="catalytic activity">
    <reaction evidence="2">
        <text>2-oxoadipate + acetyl-CoA + H2O = (R)-dihomocitrate + CoA + H(+)</text>
        <dbReference type="Rhea" id="RHEA:44924"/>
        <dbReference type="ChEBI" id="CHEBI:15377"/>
        <dbReference type="ChEBI" id="CHEBI:15378"/>
        <dbReference type="ChEBI" id="CHEBI:57287"/>
        <dbReference type="ChEBI" id="CHEBI:57288"/>
        <dbReference type="ChEBI" id="CHEBI:57499"/>
        <dbReference type="ChEBI" id="CHEBI:72697"/>
    </reaction>
    <physiologicalReaction direction="left-to-right" evidence="4">
        <dbReference type="Rhea" id="RHEA:44925"/>
    </physiologicalReaction>
</comment>
<comment type="catalytic activity">
    <reaction evidence="2">
        <text>2-oxoheptanedioate + acetyl-CoA + H2O = (R)-trihomocitrate + CoA + H(+)</text>
        <dbReference type="Rhea" id="RHEA:44928"/>
        <dbReference type="ChEBI" id="CHEBI:15377"/>
        <dbReference type="ChEBI" id="CHEBI:15378"/>
        <dbReference type="ChEBI" id="CHEBI:57287"/>
        <dbReference type="ChEBI" id="CHEBI:57288"/>
        <dbReference type="ChEBI" id="CHEBI:72699"/>
        <dbReference type="ChEBI" id="CHEBI:72701"/>
    </reaction>
    <physiologicalReaction direction="left-to-right" evidence="4">
        <dbReference type="Rhea" id="RHEA:44929"/>
    </physiologicalReaction>
</comment>
<comment type="pathway">
    <text evidence="2">Organic acid metabolism; 2-oxosuberate biosynthesis.</text>
</comment>
<comment type="miscellaneous">
    <text evidence="4">Has been shown to catalyze the formation of trans-homoaconitate (PubMed:9665716). However, probably physiologically functions as an (R)-homocitrate/(R)-dihomocitrate/(R)-trihomocitrate synthase.</text>
</comment>
<comment type="similarity">
    <text evidence="3">Belongs to the alpha-IPM synthase/homocitrate synthase family.</text>
</comment>
<feature type="chain" id="PRO_0000140410" description="Homocitrate synthase AksA">
    <location>
        <begin position="1"/>
        <end position="406"/>
    </location>
</feature>
<feature type="domain" description="Pyruvate carboxyltransferase" evidence="1">
    <location>
        <begin position="32"/>
        <end position="285"/>
    </location>
</feature>
<gene>
    <name type="primary">aksA</name>
    <name type="ordered locus">MJ0503</name>
</gene>
<organism>
    <name type="scientific">Methanocaldococcus jannaschii (strain ATCC 43067 / DSM 2661 / JAL-1 / JCM 10045 / NBRC 100440)</name>
    <name type="common">Methanococcus jannaschii</name>
    <dbReference type="NCBI Taxonomy" id="243232"/>
    <lineage>
        <taxon>Archaea</taxon>
        <taxon>Methanobacteriati</taxon>
        <taxon>Methanobacteriota</taxon>
        <taxon>Methanomada group</taxon>
        <taxon>Methanococci</taxon>
        <taxon>Methanococcales</taxon>
        <taxon>Methanocaldococcaceae</taxon>
        <taxon>Methanocaldococcus</taxon>
    </lineage>
</organism>
<sequence length="406" mass="45365">MTKVLVMFMDFLFENSWKAVCPYNPKLDLKDIYIYDTTLRDGEQTPGVCFTKEQKLEIARKLDELGLKQIEAGFPIVSEREADIVKTIANEGLNADILALCRALKKDIDKAIECDVDGIITFIATSPLHLKYKFNNKSLDEILEMGVEAVEYAKEHGLFVAFSAEDATRTPIEDLIKVHKAAEEAGADRVHIADTTGCATPQSMEFICKTLKENLKKAHIGVHCHNDFGFAVINSIYGLIGGAKAVSTTVNGIGERAGNAALEELIMALTVLYDVDLGLNLEVLPELCRMVEEYSGIKMPKNKPIVGELVFAHESGIHVDAVIENPLTYEPFLPEKIGLKRNILLGKHSGCRAVAYKLKLMGIDYDREMLCEIVKKVKEIREEGKFITDEVFKEIVEEVLRKRNKN</sequence>
<reference key="1">
    <citation type="journal article" date="1996" name="Science">
        <title>Complete genome sequence of the methanogenic archaeon, Methanococcus jannaschii.</title>
        <authorList>
            <person name="Bult C.J."/>
            <person name="White O."/>
            <person name="Olsen G.J."/>
            <person name="Zhou L."/>
            <person name="Fleischmann R.D."/>
            <person name="Sutton G.G."/>
            <person name="Blake J.A."/>
            <person name="FitzGerald L.M."/>
            <person name="Clayton R.A."/>
            <person name="Gocayne J.D."/>
            <person name="Kerlavage A.R."/>
            <person name="Dougherty B.A."/>
            <person name="Tomb J.-F."/>
            <person name="Adams M.D."/>
            <person name="Reich C.I."/>
            <person name="Overbeek R."/>
            <person name="Kirkness E.F."/>
            <person name="Weinstock K.G."/>
            <person name="Merrick J.M."/>
            <person name="Glodek A."/>
            <person name="Scott J.L."/>
            <person name="Geoghagen N.S.M."/>
            <person name="Weidman J.F."/>
            <person name="Fuhrmann J.L."/>
            <person name="Nguyen D."/>
            <person name="Utterback T.R."/>
            <person name="Kelley J.M."/>
            <person name="Peterson J.D."/>
            <person name="Sadow P.W."/>
            <person name="Hanna M.C."/>
            <person name="Cotton M.D."/>
            <person name="Roberts K.M."/>
            <person name="Hurst M.A."/>
            <person name="Kaine B.P."/>
            <person name="Borodovsky M."/>
            <person name="Klenk H.-P."/>
            <person name="Fraser C.M."/>
            <person name="Smith H.O."/>
            <person name="Woese C.R."/>
            <person name="Venter J.C."/>
        </authorList>
    </citation>
    <scope>NUCLEOTIDE SEQUENCE [LARGE SCALE GENOMIC DNA]</scope>
    <source>
        <strain>ATCC 43067 / DSM 2661 / JAL-1 / JCM 10045 / NBRC 100440</strain>
    </source>
</reference>
<reference key="2">
    <citation type="journal article" date="1998" name="Biochemistry">
        <title>Alpha-keto acid chain elongation reactions involved in the biosynthesis of coenzyme B (7-mercaptoheptanoyl threonine phosphate) in methanogenic Archaea.</title>
        <authorList>
            <person name="Howell D.M."/>
            <person name="Harich K."/>
            <person name="Xu H."/>
            <person name="White R.H."/>
        </authorList>
    </citation>
    <scope>PROTEIN SEQUENCE OF 1-5</scope>
    <scope>FUNCTION</scope>
    <scope>CATALYTIC ACTIVITY</scope>
    <scope>PATHWAY</scope>
</reference>
<name>AKSA_METJA</name>
<keyword id="KW-0903">Direct protein sequencing</keyword>
<keyword id="KW-1185">Reference proteome</keyword>
<keyword id="KW-0808">Transferase</keyword>